<proteinExistence type="inferred from homology"/>
<protein>
    <recommendedName>
        <fullName evidence="1">Acetate kinase</fullName>
        <ecNumber evidence="1">2.7.2.1</ecNumber>
    </recommendedName>
    <alternativeName>
        <fullName evidence="1">Acetokinase</fullName>
    </alternativeName>
</protein>
<accession>Q8D320</accession>
<comment type="function">
    <text evidence="1">Catalyzes the formation of acetyl phosphate from acetate and ATP. Can also catalyze the reverse reaction.</text>
</comment>
<comment type="catalytic activity">
    <reaction evidence="1">
        <text>acetate + ATP = acetyl phosphate + ADP</text>
        <dbReference type="Rhea" id="RHEA:11352"/>
        <dbReference type="ChEBI" id="CHEBI:22191"/>
        <dbReference type="ChEBI" id="CHEBI:30089"/>
        <dbReference type="ChEBI" id="CHEBI:30616"/>
        <dbReference type="ChEBI" id="CHEBI:456216"/>
        <dbReference type="EC" id="2.7.2.1"/>
    </reaction>
</comment>
<comment type="cofactor">
    <cofactor evidence="1">
        <name>Mg(2+)</name>
        <dbReference type="ChEBI" id="CHEBI:18420"/>
    </cofactor>
    <cofactor evidence="1">
        <name>Mn(2+)</name>
        <dbReference type="ChEBI" id="CHEBI:29035"/>
    </cofactor>
    <text evidence="1">Mg(2+). Can also accept Mn(2+).</text>
</comment>
<comment type="pathway">
    <text evidence="1">Metabolic intermediate biosynthesis; acetyl-CoA biosynthesis; acetyl-CoA from acetate: step 1/2.</text>
</comment>
<comment type="subunit">
    <text evidence="1">Homodimer.</text>
</comment>
<comment type="subcellular location">
    <subcellularLocation>
        <location evidence="1">Cytoplasm</location>
    </subcellularLocation>
</comment>
<comment type="similarity">
    <text evidence="1">Belongs to the acetokinase family.</text>
</comment>
<reference key="1">
    <citation type="journal article" date="2002" name="Nat. Genet.">
        <title>Genome sequence of the endocellular obligate symbiont of tsetse flies, Wigglesworthia glossinidia.</title>
        <authorList>
            <person name="Akman L."/>
            <person name="Yamashita A."/>
            <person name="Watanabe H."/>
            <person name="Oshima K."/>
            <person name="Shiba T."/>
            <person name="Hattori M."/>
            <person name="Aksoy S."/>
        </authorList>
    </citation>
    <scope>NUCLEOTIDE SEQUENCE [LARGE SCALE GENOMIC DNA]</scope>
</reference>
<keyword id="KW-0067">ATP-binding</keyword>
<keyword id="KW-0963">Cytoplasm</keyword>
<keyword id="KW-0418">Kinase</keyword>
<keyword id="KW-0460">Magnesium</keyword>
<keyword id="KW-0479">Metal-binding</keyword>
<keyword id="KW-0547">Nucleotide-binding</keyword>
<keyword id="KW-1185">Reference proteome</keyword>
<keyword id="KW-0808">Transferase</keyword>
<organism>
    <name type="scientific">Wigglesworthia glossinidia brevipalpis</name>
    <dbReference type="NCBI Taxonomy" id="36870"/>
    <lineage>
        <taxon>Bacteria</taxon>
        <taxon>Pseudomonadati</taxon>
        <taxon>Pseudomonadota</taxon>
        <taxon>Gammaproteobacteria</taxon>
        <taxon>Enterobacterales</taxon>
        <taxon>Erwiniaceae</taxon>
        <taxon>Wigglesworthia</taxon>
    </lineage>
</organism>
<sequence length="399" mass="44915">MSQNLILVLNCGSSSIKFSVIDPKTEKKYISGIAECLKLKESSVKWKIDKSYHESSLNEYSDHNLALRFIVNEILQHKKDILKKIVGIGHRIVNGGIKCTKSTIIDEKILKNIKDSIPFAPLHNPAHLIGIYESFKIFPNLINKNVAVFDTAFHQTIPEDSYLYAIPYYFYKKYNIRRYGAHGISHSYVSKKASNILNIPIEKSNLITCHLGNGGSVSAILNGKCIDTSMGLTPLEGIVMGTRCGDIDPSIIFYLHEKLKISVKEIREIFSEKSGLLGLTNISSDFRYIEDNFLKNKIAKRAMKIYCNRLSKYIGAYITLLENKLDGIVFTGGIGENAYNMRELLINKLKILGFEINKEKNFKIRLGRSGIITNSNSIPALVIPTNEELVIAKESIIFT</sequence>
<gene>
    <name evidence="1" type="primary">ackA</name>
    <name type="ordered locus">WIGBR1810</name>
</gene>
<dbReference type="EC" id="2.7.2.1" evidence="1"/>
<dbReference type="EMBL" id="BA000021">
    <property type="protein sequence ID" value="BAC24327.1"/>
    <property type="molecule type" value="Genomic_DNA"/>
</dbReference>
<dbReference type="SMR" id="Q8D320"/>
<dbReference type="STRING" id="36870.gene:10368669"/>
<dbReference type="KEGG" id="wbr:ackA"/>
<dbReference type="eggNOG" id="COG0282">
    <property type="taxonomic scope" value="Bacteria"/>
</dbReference>
<dbReference type="HOGENOM" id="CLU_020352_0_1_6"/>
<dbReference type="OrthoDB" id="9802453at2"/>
<dbReference type="UniPathway" id="UPA00340">
    <property type="reaction ID" value="UER00458"/>
</dbReference>
<dbReference type="Proteomes" id="UP000000562">
    <property type="component" value="Chromosome"/>
</dbReference>
<dbReference type="GO" id="GO:0005829">
    <property type="term" value="C:cytosol"/>
    <property type="evidence" value="ECO:0007669"/>
    <property type="project" value="TreeGrafter"/>
</dbReference>
<dbReference type="GO" id="GO:0008776">
    <property type="term" value="F:acetate kinase activity"/>
    <property type="evidence" value="ECO:0007669"/>
    <property type="project" value="UniProtKB-UniRule"/>
</dbReference>
<dbReference type="GO" id="GO:0005524">
    <property type="term" value="F:ATP binding"/>
    <property type="evidence" value="ECO:0007669"/>
    <property type="project" value="UniProtKB-KW"/>
</dbReference>
<dbReference type="GO" id="GO:0000287">
    <property type="term" value="F:magnesium ion binding"/>
    <property type="evidence" value="ECO:0007669"/>
    <property type="project" value="UniProtKB-UniRule"/>
</dbReference>
<dbReference type="GO" id="GO:0006083">
    <property type="term" value="P:acetate metabolic process"/>
    <property type="evidence" value="ECO:0007669"/>
    <property type="project" value="TreeGrafter"/>
</dbReference>
<dbReference type="GO" id="GO:0006085">
    <property type="term" value="P:acetyl-CoA biosynthetic process"/>
    <property type="evidence" value="ECO:0007669"/>
    <property type="project" value="UniProtKB-UniRule"/>
</dbReference>
<dbReference type="CDD" id="cd24010">
    <property type="entry name" value="ASKHA_NBD_AcK_PK"/>
    <property type="match status" value="1"/>
</dbReference>
<dbReference type="Gene3D" id="3.30.420.40">
    <property type="match status" value="2"/>
</dbReference>
<dbReference type="HAMAP" id="MF_00020">
    <property type="entry name" value="Acetate_kinase"/>
    <property type="match status" value="1"/>
</dbReference>
<dbReference type="InterPro" id="IPR004372">
    <property type="entry name" value="Ac/propionate_kinase"/>
</dbReference>
<dbReference type="InterPro" id="IPR000890">
    <property type="entry name" value="Aliphatic_acid_kin_short-chain"/>
</dbReference>
<dbReference type="InterPro" id="IPR023865">
    <property type="entry name" value="Aliphatic_acid_kinase_CS"/>
</dbReference>
<dbReference type="InterPro" id="IPR043129">
    <property type="entry name" value="ATPase_NBD"/>
</dbReference>
<dbReference type="NCBIfam" id="TIGR00016">
    <property type="entry name" value="ackA"/>
    <property type="match status" value="1"/>
</dbReference>
<dbReference type="PANTHER" id="PTHR21060">
    <property type="entry name" value="ACETATE KINASE"/>
    <property type="match status" value="1"/>
</dbReference>
<dbReference type="PANTHER" id="PTHR21060:SF21">
    <property type="entry name" value="ACETATE KINASE"/>
    <property type="match status" value="1"/>
</dbReference>
<dbReference type="Pfam" id="PF00871">
    <property type="entry name" value="Acetate_kinase"/>
    <property type="match status" value="1"/>
</dbReference>
<dbReference type="PIRSF" id="PIRSF000722">
    <property type="entry name" value="Acetate_prop_kin"/>
    <property type="match status" value="1"/>
</dbReference>
<dbReference type="PRINTS" id="PR00471">
    <property type="entry name" value="ACETATEKNASE"/>
</dbReference>
<dbReference type="SUPFAM" id="SSF53067">
    <property type="entry name" value="Actin-like ATPase domain"/>
    <property type="match status" value="2"/>
</dbReference>
<dbReference type="PROSITE" id="PS01075">
    <property type="entry name" value="ACETATE_KINASE_1"/>
    <property type="match status" value="1"/>
</dbReference>
<dbReference type="PROSITE" id="PS01076">
    <property type="entry name" value="ACETATE_KINASE_2"/>
    <property type="match status" value="1"/>
</dbReference>
<feature type="chain" id="PRO_0000107645" description="Acetate kinase">
    <location>
        <begin position="1"/>
        <end position="399"/>
    </location>
</feature>
<feature type="active site" description="Proton donor/acceptor" evidence="1">
    <location>
        <position position="150"/>
    </location>
</feature>
<feature type="binding site" evidence="1">
    <location>
        <position position="10"/>
    </location>
    <ligand>
        <name>Mg(2+)</name>
        <dbReference type="ChEBI" id="CHEBI:18420"/>
    </ligand>
</feature>
<feature type="binding site" evidence="1">
    <location>
        <position position="17"/>
    </location>
    <ligand>
        <name>ATP</name>
        <dbReference type="ChEBI" id="CHEBI:30616"/>
    </ligand>
</feature>
<feature type="binding site" evidence="1">
    <location>
        <position position="91"/>
    </location>
    <ligand>
        <name>substrate</name>
    </ligand>
</feature>
<feature type="binding site" evidence="1">
    <location>
        <begin position="210"/>
        <end position="214"/>
    </location>
    <ligand>
        <name>ATP</name>
        <dbReference type="ChEBI" id="CHEBI:30616"/>
    </ligand>
</feature>
<feature type="binding site" evidence="1">
    <location>
        <begin position="285"/>
        <end position="287"/>
    </location>
    <ligand>
        <name>ATP</name>
        <dbReference type="ChEBI" id="CHEBI:30616"/>
    </ligand>
</feature>
<feature type="binding site" evidence="1">
    <location>
        <begin position="333"/>
        <end position="337"/>
    </location>
    <ligand>
        <name>ATP</name>
        <dbReference type="ChEBI" id="CHEBI:30616"/>
    </ligand>
</feature>
<feature type="binding site" evidence="1">
    <location>
        <position position="387"/>
    </location>
    <ligand>
        <name>Mg(2+)</name>
        <dbReference type="ChEBI" id="CHEBI:18420"/>
    </ligand>
</feature>
<feature type="site" description="Transition state stabilizer" evidence="1">
    <location>
        <position position="182"/>
    </location>
</feature>
<feature type="site" description="Transition state stabilizer" evidence="1">
    <location>
        <position position="243"/>
    </location>
</feature>
<evidence type="ECO:0000255" key="1">
    <source>
        <dbReference type="HAMAP-Rule" id="MF_00020"/>
    </source>
</evidence>
<name>ACKA_WIGBR</name>